<dbReference type="EMBL" id="CR382134">
    <property type="protein sequence ID" value="CAG85413.2"/>
    <property type="molecule type" value="Genomic_DNA"/>
</dbReference>
<dbReference type="RefSeq" id="XP_457409.2">
    <property type="nucleotide sequence ID" value="XM_457409.1"/>
</dbReference>
<dbReference type="SMR" id="Q6BWL0"/>
<dbReference type="FunCoup" id="Q6BWL0">
    <property type="interactions" value="13"/>
</dbReference>
<dbReference type="STRING" id="284592.Q6BWL0"/>
<dbReference type="GeneID" id="2913336"/>
<dbReference type="KEGG" id="dha:DEHA2B10494g"/>
<dbReference type="VEuPathDB" id="FungiDB:DEHA2B10494g"/>
<dbReference type="eggNOG" id="ENOG502RNK4">
    <property type="taxonomic scope" value="Eukaryota"/>
</dbReference>
<dbReference type="HOGENOM" id="CLU_054606_2_0_1"/>
<dbReference type="InParanoid" id="Q6BWL0"/>
<dbReference type="OMA" id="TITQYAN"/>
<dbReference type="OrthoDB" id="10061064at2759"/>
<dbReference type="Proteomes" id="UP000000599">
    <property type="component" value="Chromosome B"/>
</dbReference>
<dbReference type="GO" id="GO:0005737">
    <property type="term" value="C:cytoplasm"/>
    <property type="evidence" value="ECO:0007669"/>
    <property type="project" value="UniProtKB-SubCell"/>
</dbReference>
<dbReference type="GO" id="GO:0031965">
    <property type="term" value="C:nuclear membrane"/>
    <property type="evidence" value="ECO:0007669"/>
    <property type="project" value="TreeGrafter"/>
</dbReference>
<dbReference type="GO" id="GO:0070628">
    <property type="term" value="F:proteasome binding"/>
    <property type="evidence" value="ECO:0007669"/>
    <property type="project" value="TreeGrafter"/>
</dbReference>
<dbReference type="GO" id="GO:0071630">
    <property type="term" value="P:nuclear protein quality control by the ubiquitin-proteasome system"/>
    <property type="evidence" value="ECO:0007669"/>
    <property type="project" value="InterPro"/>
</dbReference>
<dbReference type="GO" id="GO:0031144">
    <property type="term" value="P:proteasome localization"/>
    <property type="evidence" value="ECO:0007669"/>
    <property type="project" value="InterPro"/>
</dbReference>
<dbReference type="GO" id="GO:0015031">
    <property type="term" value="P:protein transport"/>
    <property type="evidence" value="ECO:0007669"/>
    <property type="project" value="UniProtKB-KW"/>
</dbReference>
<dbReference type="Gene3D" id="1.20.58.1590">
    <property type="entry name" value="Tethering factor for nuclear proteasome Cut8/Sts1"/>
    <property type="match status" value="1"/>
</dbReference>
<dbReference type="InterPro" id="IPR013868">
    <property type="entry name" value="Cut8/Sts1_fam"/>
</dbReference>
<dbReference type="InterPro" id="IPR038422">
    <property type="entry name" value="Cut8/Sts1_sf"/>
</dbReference>
<dbReference type="PANTHER" id="PTHR28032">
    <property type="entry name" value="FI02826P"/>
    <property type="match status" value="1"/>
</dbReference>
<dbReference type="PANTHER" id="PTHR28032:SF1">
    <property type="entry name" value="FI02826P"/>
    <property type="match status" value="1"/>
</dbReference>
<dbReference type="Pfam" id="PF08559">
    <property type="entry name" value="Cut8"/>
    <property type="match status" value="1"/>
</dbReference>
<keyword id="KW-0963">Cytoplasm</keyword>
<keyword id="KW-0539">Nucleus</keyword>
<keyword id="KW-0653">Protein transport</keyword>
<keyword id="KW-1185">Reference proteome</keyword>
<keyword id="KW-0813">Transport</keyword>
<protein>
    <recommendedName>
        <fullName>Tethering factor for nuclear proteasome STS1</fullName>
    </recommendedName>
</protein>
<accession>Q6BWL0</accession>
<sequence length="350" mass="39814">MMSTGFSWGTQALSESTEVNSGLGDLPTSIPRYTPNLKPVNNNHHSNGKKRRYSEDQESKVVKPTGNRKHYTTPSTYYKSKKSRTPKIMGQKLPINRLVEALDHTSLQRLLESLIHEHPEISNTIDKISPKPTLTDSIELIKQKFNSIMHHLPYKCDTESDYSYLRIKTHLNEFLNCLSDFILNFLPPIETNVFNSLKFLDEVTDLIHTLPNFSNSEFQYTKSMAYEQISNTWLIVLNHKMRPDDGTNNNNTSNTNEALSSSSSPSPVAQCNMENSAQLIKIIDELNLQQKLAKHDNMSIGKFKLVVEFVNSEIENYENFNHTVTNNGGILNDLITVDYSNFSIAARTSH</sequence>
<comment type="function">
    <text evidence="1">Involved in ubiquitin-mediated protein degradation. Regulatory factor in the ubiquitin/proteasome pathway that controls the turnover of proteasome substrates. Targets proteasomes to the nucleus and facilitates the degradation of nuclear proteins (By similarity).</text>
</comment>
<comment type="subunit">
    <text evidence="1">Binds the proteasome.</text>
</comment>
<comment type="subcellular location">
    <subcellularLocation>
        <location evidence="1">Cytoplasm</location>
    </subcellularLocation>
    <subcellularLocation>
        <location evidence="1">Nucleus</location>
    </subcellularLocation>
</comment>
<comment type="similarity">
    <text evidence="3">Belongs to the cut8/STS1 family.</text>
</comment>
<feature type="chain" id="PRO_0000409410" description="Tethering factor for nuclear proteasome STS1">
    <location>
        <begin position="1"/>
        <end position="350"/>
    </location>
</feature>
<feature type="region of interest" description="Disordered" evidence="2">
    <location>
        <begin position="17"/>
        <end position="84"/>
    </location>
</feature>
<feature type="region of interest" description="Disordered" evidence="2">
    <location>
        <begin position="244"/>
        <end position="269"/>
    </location>
</feature>
<feature type="compositionally biased region" description="Low complexity" evidence="2">
    <location>
        <begin position="247"/>
        <end position="266"/>
    </location>
</feature>
<gene>
    <name type="primary">STS1</name>
    <name type="ordered locus">DEHA2B10494g</name>
</gene>
<evidence type="ECO:0000250" key="1"/>
<evidence type="ECO:0000256" key="2">
    <source>
        <dbReference type="SAM" id="MobiDB-lite"/>
    </source>
</evidence>
<evidence type="ECO:0000305" key="3"/>
<reference key="1">
    <citation type="journal article" date="2004" name="Nature">
        <title>Genome evolution in yeasts.</title>
        <authorList>
            <person name="Dujon B."/>
            <person name="Sherman D."/>
            <person name="Fischer G."/>
            <person name="Durrens P."/>
            <person name="Casaregola S."/>
            <person name="Lafontaine I."/>
            <person name="de Montigny J."/>
            <person name="Marck C."/>
            <person name="Neuveglise C."/>
            <person name="Talla E."/>
            <person name="Goffard N."/>
            <person name="Frangeul L."/>
            <person name="Aigle M."/>
            <person name="Anthouard V."/>
            <person name="Babour A."/>
            <person name="Barbe V."/>
            <person name="Barnay S."/>
            <person name="Blanchin S."/>
            <person name="Beckerich J.-M."/>
            <person name="Beyne E."/>
            <person name="Bleykasten C."/>
            <person name="Boisrame A."/>
            <person name="Boyer J."/>
            <person name="Cattolico L."/>
            <person name="Confanioleri F."/>
            <person name="de Daruvar A."/>
            <person name="Despons L."/>
            <person name="Fabre E."/>
            <person name="Fairhead C."/>
            <person name="Ferry-Dumazet H."/>
            <person name="Groppi A."/>
            <person name="Hantraye F."/>
            <person name="Hennequin C."/>
            <person name="Jauniaux N."/>
            <person name="Joyet P."/>
            <person name="Kachouri R."/>
            <person name="Kerrest A."/>
            <person name="Koszul R."/>
            <person name="Lemaire M."/>
            <person name="Lesur I."/>
            <person name="Ma L."/>
            <person name="Muller H."/>
            <person name="Nicaud J.-M."/>
            <person name="Nikolski M."/>
            <person name="Oztas S."/>
            <person name="Ozier-Kalogeropoulos O."/>
            <person name="Pellenz S."/>
            <person name="Potier S."/>
            <person name="Richard G.-F."/>
            <person name="Straub M.-L."/>
            <person name="Suleau A."/>
            <person name="Swennen D."/>
            <person name="Tekaia F."/>
            <person name="Wesolowski-Louvel M."/>
            <person name="Westhof E."/>
            <person name="Wirth B."/>
            <person name="Zeniou-Meyer M."/>
            <person name="Zivanovic Y."/>
            <person name="Bolotin-Fukuhara M."/>
            <person name="Thierry A."/>
            <person name="Bouchier C."/>
            <person name="Caudron B."/>
            <person name="Scarpelli C."/>
            <person name="Gaillardin C."/>
            <person name="Weissenbach J."/>
            <person name="Wincker P."/>
            <person name="Souciet J.-L."/>
        </authorList>
    </citation>
    <scope>NUCLEOTIDE SEQUENCE [LARGE SCALE GENOMIC DNA]</scope>
    <source>
        <strain>ATCC 36239 / CBS 767 / BCRC 21394 / JCM 1990 / NBRC 0083 / IGC 2968</strain>
    </source>
</reference>
<organism>
    <name type="scientific">Debaryomyces hansenii (strain ATCC 36239 / CBS 767 / BCRC 21394 / JCM 1990 / NBRC 0083 / IGC 2968)</name>
    <name type="common">Yeast</name>
    <name type="synonym">Torulaspora hansenii</name>
    <dbReference type="NCBI Taxonomy" id="284592"/>
    <lineage>
        <taxon>Eukaryota</taxon>
        <taxon>Fungi</taxon>
        <taxon>Dikarya</taxon>
        <taxon>Ascomycota</taxon>
        <taxon>Saccharomycotina</taxon>
        <taxon>Pichiomycetes</taxon>
        <taxon>Debaryomycetaceae</taxon>
        <taxon>Debaryomyces</taxon>
    </lineage>
</organism>
<name>STS1_DEBHA</name>
<proteinExistence type="inferred from homology"/>